<organism>
    <name type="scientific">Hepatitis B virus genotype C subtype adr (strain Japan/adr4/1983)</name>
    <name type="common">HBV-C</name>
    <dbReference type="NCBI Taxonomy" id="10409"/>
    <lineage>
        <taxon>Viruses</taxon>
        <taxon>Riboviria</taxon>
        <taxon>Pararnavirae</taxon>
        <taxon>Artverviricota</taxon>
        <taxon>Revtraviricetes</taxon>
        <taxon>Blubervirales</taxon>
        <taxon>Hepadnaviridae</taxon>
        <taxon>Orthohepadnavirus</taxon>
        <taxon>Hepatitis B virus</taxon>
    </lineage>
</organism>
<sequence>MAARVCCQLDPARDVLCLRPVGAESRGRPVSGPFGTLPSPSSSAVPADHGAHLSLRGLFVCAFSSAGPCALRFTSARRMETTVNAHQVLPKVLHKRTLGLSAMSTTDLEAYFKDCLFKDWEELGEEIRLKVFVLGGCRHKLVCSPAPCNFFTSA</sequence>
<organismHost>
    <name type="scientific">Homo sapiens</name>
    <name type="common">Human</name>
    <dbReference type="NCBI Taxonomy" id="9606"/>
</organismHost>
<organismHost>
    <name type="scientific">Pan troglodytes</name>
    <name type="common">Chimpanzee</name>
    <dbReference type="NCBI Taxonomy" id="9598"/>
</organismHost>
<accession>P12936</accession>
<evidence type="ECO:0000255" key="1">
    <source>
        <dbReference type="HAMAP-Rule" id="MF_04074"/>
    </source>
</evidence>
<protein>
    <recommendedName>
        <fullName evidence="1">Protein X</fullName>
    </recommendedName>
    <alternativeName>
        <fullName evidence="1">HBx</fullName>
    </alternativeName>
    <alternativeName>
        <fullName evidence="1">Peptide X</fullName>
    </alternativeName>
    <alternativeName>
        <fullName evidence="1">pX</fullName>
    </alternativeName>
</protein>
<comment type="function">
    <text evidence="1">Multifunctional protein that plays a role in silencing host antiviral defenses and promoting viral transcription. Does not seem to be essential for HBV infection. May be directly involved in development of cirrhosis and liver cancer (hepatocellular carcinoma). Most of cytosolic activities involve modulation of cytosolic calcium. The effect on apoptosis is controversial depending on the cell types in which the studies have been conducted. May induce apoptosis by localizing in mitochondria and causing loss of mitochondrial membrane potential. May also modulate apoptosis by binding host CFLAR, a key regulator of the death-inducing signaling complex (DISC). Promotes viral transcription by using the host E3 ubiquitin ligase DDB1 to target the SMC5-SMC6 complex to proteasomal degradation. This host complex would otherwise bind to viral episomal DNA, and prevents its transcription. Moderately stimulates transcription of many different viral and cellular transcription elements. Promoters and enhancers stimulated by HBx contain DNA binding sites for NF-kappa-B, AP-1, AP-2, c-EBP, ATF/CREB, or the calcium-activated factor NF-AT.</text>
</comment>
<comment type="subunit">
    <text evidence="1">May form homodimer. May interact with host CEBPA, CFLAR, CREB1, DDB1, E4F1, HBXIP, HSPD1/HSP60, NFKBIA, POLR2E and SMAD4. Interacts with host SMC5-SMC6 complex and induces its degradation. Interacts with host TRPC4AP; leading to prevent ubiquitination of TRPC4AP. Interacts with host PLSCR1; this interaction promotes ubiquitination and degradation of HBx and impairs HBx-mediated cell proliferation.</text>
</comment>
<comment type="subcellular location">
    <subcellularLocation>
        <location evidence="1">Host cytoplasm</location>
    </subcellularLocation>
    <subcellularLocation>
        <location evidence="1">Host nucleus</location>
    </subcellularLocation>
    <subcellularLocation>
        <location evidence="1">Host mitochondrion</location>
    </subcellularLocation>
    <text evidence="1">Mainly cytoplasmic as only a fraction is detected in the nucleus. In cytoplasm, a minor fraction associates with mitochondria or proteasomes.</text>
</comment>
<comment type="PTM">
    <text evidence="1">A fraction may be phosphorylated in insect cells and HepG2 cells, a human hepatoblastoma cell line. Phosphorylated in vitro by host protein kinase C or mitogen-activated protein kinase. N-acetylated in insect cells.</text>
</comment>
<comment type="similarity">
    <text evidence="1">Belongs to the orthohepadnavirus protein X family.</text>
</comment>
<comment type="caution">
    <text>Transcriptional activities should be taken with a grain of salt. As of 2007, all studies demonstrating in vivo interaction between protein X and transcriptional components were performed with significant overexpression of both proteins and in the absence of viral infection.</text>
</comment>
<gene>
    <name evidence="1" type="primary">X</name>
</gene>
<feature type="chain" id="PRO_0000222362" description="Protein X">
    <location>
        <begin position="1"/>
        <end position="154"/>
    </location>
</feature>
<feature type="region of interest" description="Mitochondrial targeting sequence" evidence="1">
    <location>
        <begin position="68"/>
        <end position="117"/>
    </location>
</feature>
<dbReference type="EMBL" id="X01587">
    <property type="protein sequence ID" value="CAA25744.1"/>
    <property type="molecule type" value="Genomic_DNA"/>
</dbReference>
<dbReference type="SMR" id="P12936"/>
<dbReference type="Proteomes" id="UP000007923">
    <property type="component" value="Genome"/>
</dbReference>
<dbReference type="GO" id="GO:0033650">
    <property type="term" value="C:host cell mitochondrion"/>
    <property type="evidence" value="ECO:0007669"/>
    <property type="project" value="UniProtKB-SubCell"/>
</dbReference>
<dbReference type="GO" id="GO:0042025">
    <property type="term" value="C:host cell nucleus"/>
    <property type="evidence" value="ECO:0007669"/>
    <property type="project" value="UniProtKB-SubCell"/>
</dbReference>
<dbReference type="GO" id="GO:0006351">
    <property type="term" value="P:DNA-templated transcription"/>
    <property type="evidence" value="ECO:0007669"/>
    <property type="project" value="UniProtKB-UniRule"/>
</dbReference>
<dbReference type="GO" id="GO:0085033">
    <property type="term" value="P:symbiont-mediated activation of host NF-kappaB cascade"/>
    <property type="evidence" value="ECO:0007669"/>
    <property type="project" value="UniProtKB-UniRule"/>
</dbReference>
<dbReference type="GO" id="GO:0039592">
    <property type="term" value="P:symbiont-mediated arrest of host cell cycle during G2/M transition"/>
    <property type="evidence" value="ECO:0007669"/>
    <property type="project" value="UniProtKB-UniRule"/>
</dbReference>
<dbReference type="GO" id="GO:0019079">
    <property type="term" value="P:viral genome replication"/>
    <property type="evidence" value="ECO:0007669"/>
    <property type="project" value="UniProtKB-UniRule"/>
</dbReference>
<dbReference type="HAMAP" id="MF_04074">
    <property type="entry name" value="HBV_X"/>
    <property type="match status" value="1"/>
</dbReference>
<dbReference type="InterPro" id="IPR000236">
    <property type="entry name" value="Transactivation_prot_X"/>
</dbReference>
<dbReference type="Pfam" id="PF00739">
    <property type="entry name" value="X"/>
    <property type="match status" value="1"/>
</dbReference>
<proteinExistence type="inferred from homology"/>
<keyword id="KW-1074">Activation of host NF-kappa-B by virus</keyword>
<keyword id="KW-0010">Activator</keyword>
<keyword id="KW-0053">Apoptosis</keyword>
<keyword id="KW-1035">Host cytoplasm</keyword>
<keyword id="KW-1079">Host G2/M cell cycle arrest by virus</keyword>
<keyword id="KW-1045">Host mitochondrion</keyword>
<keyword id="KW-1048">Host nucleus</keyword>
<keyword id="KW-0945">Host-virus interaction</keyword>
<keyword id="KW-1121">Modulation of host cell cycle by virus</keyword>
<keyword id="KW-0804">Transcription</keyword>
<keyword id="KW-0805">Transcription regulation</keyword>
<reference key="1">
    <citation type="journal article" date="1983" name="Nucleic Acids Res.">
        <title>Cloning and structural analyses of hepatitis B virus DNAs, subtype adr.</title>
        <authorList>
            <person name="Fujiyama A."/>
            <person name="Miyanohara A."/>
            <person name="Nozaki C."/>
            <person name="Yoneyama T."/>
            <person name="Ohtomo N."/>
            <person name="Matsubara K."/>
        </authorList>
    </citation>
    <scope>NUCLEOTIDE SEQUENCE [GENOMIC DNA]</scope>
</reference>
<reference key="2">
    <citation type="journal article" date="2004" name="J. Virol.">
        <title>The enigmatic X gene of hepatitis B virus.</title>
        <authorList>
            <person name="Bouchard M.J."/>
            <person name="Schneider R.J."/>
        </authorList>
    </citation>
    <scope>REVIEW</scope>
</reference>
<reference key="3">
    <citation type="journal article" date="2006" name="Cancer Sci.">
        <title>Molecular functions and biological roles of hepatitis B virus x protein.</title>
        <authorList>
            <person name="Tang H."/>
            <person name="Oishi N."/>
            <person name="Kaneko S."/>
            <person name="Murakami S."/>
        </authorList>
    </citation>
    <scope>REVIEW</scope>
</reference>
<name>X_HBVC3</name>